<sequence>MAENQNYGTGRRKSSSARVFIKPGSGKIVINQRELDVYFGRETSRMIVRQPLELVELTDKLDLYVTVKGGGISGQAGAIRHGITRALIEYDETLRPALRAAGFVTRDARRVERKKIGLHKARRRPQYSKR</sequence>
<dbReference type="EMBL" id="CP000947">
    <property type="protein sequence ID" value="ACA30946.1"/>
    <property type="molecule type" value="Genomic_DNA"/>
</dbReference>
<dbReference type="RefSeq" id="WP_011608906.1">
    <property type="nucleotide sequence ID" value="NC_010519.1"/>
</dbReference>
<dbReference type="SMR" id="B0UTU5"/>
<dbReference type="STRING" id="228400.HSM_1220"/>
<dbReference type="GeneID" id="31487523"/>
<dbReference type="KEGG" id="hsm:HSM_1220"/>
<dbReference type="HOGENOM" id="CLU_046483_2_1_6"/>
<dbReference type="GO" id="GO:0022627">
    <property type="term" value="C:cytosolic small ribosomal subunit"/>
    <property type="evidence" value="ECO:0007669"/>
    <property type="project" value="TreeGrafter"/>
</dbReference>
<dbReference type="GO" id="GO:0003723">
    <property type="term" value="F:RNA binding"/>
    <property type="evidence" value="ECO:0007669"/>
    <property type="project" value="TreeGrafter"/>
</dbReference>
<dbReference type="GO" id="GO:0003735">
    <property type="term" value="F:structural constituent of ribosome"/>
    <property type="evidence" value="ECO:0007669"/>
    <property type="project" value="InterPro"/>
</dbReference>
<dbReference type="GO" id="GO:0006412">
    <property type="term" value="P:translation"/>
    <property type="evidence" value="ECO:0007669"/>
    <property type="project" value="UniProtKB-UniRule"/>
</dbReference>
<dbReference type="FunFam" id="3.30.230.10:FF:000001">
    <property type="entry name" value="30S ribosomal protein S9"/>
    <property type="match status" value="1"/>
</dbReference>
<dbReference type="Gene3D" id="3.30.230.10">
    <property type="match status" value="1"/>
</dbReference>
<dbReference type="HAMAP" id="MF_00532_B">
    <property type="entry name" value="Ribosomal_uS9_B"/>
    <property type="match status" value="1"/>
</dbReference>
<dbReference type="InterPro" id="IPR020568">
    <property type="entry name" value="Ribosomal_Su5_D2-typ_SF"/>
</dbReference>
<dbReference type="InterPro" id="IPR000754">
    <property type="entry name" value="Ribosomal_uS9"/>
</dbReference>
<dbReference type="InterPro" id="IPR023035">
    <property type="entry name" value="Ribosomal_uS9_bac/plastid"/>
</dbReference>
<dbReference type="InterPro" id="IPR020574">
    <property type="entry name" value="Ribosomal_uS9_CS"/>
</dbReference>
<dbReference type="InterPro" id="IPR014721">
    <property type="entry name" value="Ribsml_uS5_D2-typ_fold_subgr"/>
</dbReference>
<dbReference type="NCBIfam" id="NF001099">
    <property type="entry name" value="PRK00132.1"/>
    <property type="match status" value="1"/>
</dbReference>
<dbReference type="PANTHER" id="PTHR21569">
    <property type="entry name" value="RIBOSOMAL PROTEIN S9"/>
    <property type="match status" value="1"/>
</dbReference>
<dbReference type="PANTHER" id="PTHR21569:SF1">
    <property type="entry name" value="SMALL RIBOSOMAL SUBUNIT PROTEIN US9M"/>
    <property type="match status" value="1"/>
</dbReference>
<dbReference type="Pfam" id="PF00380">
    <property type="entry name" value="Ribosomal_S9"/>
    <property type="match status" value="1"/>
</dbReference>
<dbReference type="SUPFAM" id="SSF54211">
    <property type="entry name" value="Ribosomal protein S5 domain 2-like"/>
    <property type="match status" value="1"/>
</dbReference>
<dbReference type="PROSITE" id="PS00360">
    <property type="entry name" value="RIBOSOMAL_S9"/>
    <property type="match status" value="1"/>
</dbReference>
<proteinExistence type="inferred from homology"/>
<feature type="chain" id="PRO_1000081819" description="Small ribosomal subunit protein uS9">
    <location>
        <begin position="1"/>
        <end position="130"/>
    </location>
</feature>
<name>RS9_HISS2</name>
<gene>
    <name evidence="1" type="primary">rpsI</name>
    <name type="ordered locus">HSM_1220</name>
</gene>
<protein>
    <recommendedName>
        <fullName evidence="1">Small ribosomal subunit protein uS9</fullName>
    </recommendedName>
    <alternativeName>
        <fullName evidence="2">30S ribosomal protein S9</fullName>
    </alternativeName>
</protein>
<accession>B0UTU5</accession>
<keyword id="KW-0687">Ribonucleoprotein</keyword>
<keyword id="KW-0689">Ribosomal protein</keyword>
<evidence type="ECO:0000255" key="1">
    <source>
        <dbReference type="HAMAP-Rule" id="MF_00532"/>
    </source>
</evidence>
<evidence type="ECO:0000305" key="2"/>
<reference key="1">
    <citation type="submission" date="2008-02" db="EMBL/GenBank/DDBJ databases">
        <title>Complete sequence of Haemophilus somnus 2336.</title>
        <authorList>
            <consortium name="US DOE Joint Genome Institute"/>
            <person name="Siddaramappa S."/>
            <person name="Duncan A.J."/>
            <person name="Challacombe J.F."/>
            <person name="Rainey D."/>
            <person name="Gillaspy A.F."/>
            <person name="Carson M."/>
            <person name="Gipson J."/>
            <person name="Gipson M."/>
            <person name="Bruce D."/>
            <person name="Detter J.C."/>
            <person name="Han C.S."/>
            <person name="Land M."/>
            <person name="Tapia R."/>
            <person name="Thompson L.S."/>
            <person name="Orvis J."/>
            <person name="Zaitshik J."/>
            <person name="Barnes G."/>
            <person name="Brettin T.S."/>
            <person name="Dyer D.W."/>
            <person name="Inzana T.J."/>
        </authorList>
    </citation>
    <scope>NUCLEOTIDE SEQUENCE [LARGE SCALE GENOMIC DNA]</scope>
    <source>
        <strain>2336</strain>
    </source>
</reference>
<comment type="similarity">
    <text evidence="1">Belongs to the universal ribosomal protein uS9 family.</text>
</comment>
<organism>
    <name type="scientific">Histophilus somni (strain 2336)</name>
    <name type="common">Haemophilus somnus</name>
    <dbReference type="NCBI Taxonomy" id="228400"/>
    <lineage>
        <taxon>Bacteria</taxon>
        <taxon>Pseudomonadati</taxon>
        <taxon>Pseudomonadota</taxon>
        <taxon>Gammaproteobacteria</taxon>
        <taxon>Pasteurellales</taxon>
        <taxon>Pasteurellaceae</taxon>
        <taxon>Histophilus</taxon>
    </lineage>
</organism>